<protein>
    <recommendedName>
        <fullName evidence="1">Threonylcarbamoyl-AMP synthase</fullName>
        <shortName evidence="1">TC-AMP synthase</shortName>
        <ecNumber evidence="1">2.7.7.87</ecNumber>
    </recommendedName>
    <alternativeName>
        <fullName evidence="1">L-threonylcarbamoyladenylate synthase</fullName>
    </alternativeName>
    <alternativeName>
        <fullName evidence="1">t(6)A37 threonylcarbamoyladenosine biosynthesis protein TsaC</fullName>
    </alternativeName>
    <alternativeName>
        <fullName evidence="1">tRNA threonylcarbamoyladenosine biosynthesis protein TsaC</fullName>
    </alternativeName>
</protein>
<evidence type="ECO:0000255" key="1">
    <source>
        <dbReference type="HAMAP-Rule" id="MF_01852"/>
    </source>
</evidence>
<evidence type="ECO:0000305" key="2"/>
<organism>
    <name type="scientific">Shigella flexneri</name>
    <dbReference type="NCBI Taxonomy" id="623"/>
    <lineage>
        <taxon>Bacteria</taxon>
        <taxon>Pseudomonadati</taxon>
        <taxon>Pseudomonadota</taxon>
        <taxon>Gammaproteobacteria</taxon>
        <taxon>Enterobacterales</taxon>
        <taxon>Enterobacteriaceae</taxon>
        <taxon>Shigella</taxon>
    </lineage>
</organism>
<name>TSAC_SHIFL</name>
<proteinExistence type="inferred from homology"/>
<feature type="chain" id="PRO_0000352994" description="Threonylcarbamoyl-AMP synthase">
    <location>
        <begin position="1"/>
        <end position="190"/>
    </location>
</feature>
<feature type="domain" description="YrdC-like" evidence="1">
    <location>
        <begin position="7"/>
        <end position="190"/>
    </location>
</feature>
<feature type="sequence conflict" description="In Ref. 2; AAP18586." evidence="2" ref="2">
    <original>R</original>
    <variation>G</variation>
    <location>
        <position position="170"/>
    </location>
</feature>
<gene>
    <name evidence="1" type="primary">tsaC</name>
    <name type="synonym">rimN</name>
    <name type="ordered locus">SF3314</name>
    <name type="ordered locus">S3538</name>
</gene>
<accession>Q83JD1</accession>
<accession>Q7UBD6</accession>
<keyword id="KW-0067">ATP-binding</keyword>
<keyword id="KW-0963">Cytoplasm</keyword>
<keyword id="KW-0547">Nucleotide-binding</keyword>
<keyword id="KW-0548">Nucleotidyltransferase</keyword>
<keyword id="KW-1185">Reference proteome</keyword>
<keyword id="KW-0808">Transferase</keyword>
<keyword id="KW-0819">tRNA processing</keyword>
<sequence>MNNNLQGDAIAAAIDVLNEKRVIAYPTEAVFGVGCDPDSETAVMRLLELKQRPVDKGLILIAANYEQLKPYIDDTMLTDVQRETIFSCWPGPVTFVFPAPATTPRWLTGRFDSLAVRVTDHPLVVALCQAYGKPLVSTSANLSGLPPCRTVDEVRAQFGAAFPVVPGETRGRLNPSEIRDALTGELFRQG</sequence>
<reference key="1">
    <citation type="journal article" date="2002" name="Nucleic Acids Res.">
        <title>Genome sequence of Shigella flexneri 2a: insights into pathogenicity through comparison with genomes of Escherichia coli K12 and O157.</title>
        <authorList>
            <person name="Jin Q."/>
            <person name="Yuan Z."/>
            <person name="Xu J."/>
            <person name="Wang Y."/>
            <person name="Shen Y."/>
            <person name="Lu W."/>
            <person name="Wang J."/>
            <person name="Liu H."/>
            <person name="Yang J."/>
            <person name="Yang F."/>
            <person name="Zhang X."/>
            <person name="Zhang J."/>
            <person name="Yang G."/>
            <person name="Wu H."/>
            <person name="Qu D."/>
            <person name="Dong J."/>
            <person name="Sun L."/>
            <person name="Xue Y."/>
            <person name="Zhao A."/>
            <person name="Gao Y."/>
            <person name="Zhu J."/>
            <person name="Kan B."/>
            <person name="Ding K."/>
            <person name="Chen S."/>
            <person name="Cheng H."/>
            <person name="Yao Z."/>
            <person name="He B."/>
            <person name="Chen R."/>
            <person name="Ma D."/>
            <person name="Qiang B."/>
            <person name="Wen Y."/>
            <person name="Hou Y."/>
            <person name="Yu J."/>
        </authorList>
    </citation>
    <scope>NUCLEOTIDE SEQUENCE [LARGE SCALE GENOMIC DNA]</scope>
    <source>
        <strain>301 / Serotype 2a</strain>
    </source>
</reference>
<reference key="2">
    <citation type="journal article" date="2003" name="Infect. Immun.">
        <title>Complete genome sequence and comparative genomics of Shigella flexneri serotype 2a strain 2457T.</title>
        <authorList>
            <person name="Wei J."/>
            <person name="Goldberg M.B."/>
            <person name="Burland V."/>
            <person name="Venkatesan M.M."/>
            <person name="Deng W."/>
            <person name="Fournier G."/>
            <person name="Mayhew G.F."/>
            <person name="Plunkett G. III"/>
            <person name="Rose D.J."/>
            <person name="Darling A."/>
            <person name="Mau B."/>
            <person name="Perna N.T."/>
            <person name="Payne S.M."/>
            <person name="Runyen-Janecky L.J."/>
            <person name="Zhou S."/>
            <person name="Schwartz D.C."/>
            <person name="Blattner F.R."/>
        </authorList>
    </citation>
    <scope>NUCLEOTIDE SEQUENCE [LARGE SCALE GENOMIC DNA]</scope>
    <source>
        <strain>ATCC 700930 / 2457T / Serotype 2a</strain>
    </source>
</reference>
<dbReference type="EC" id="2.7.7.87" evidence="1"/>
<dbReference type="EMBL" id="AE005674">
    <property type="protein sequence ID" value="AAN44777.2"/>
    <property type="molecule type" value="Genomic_DNA"/>
</dbReference>
<dbReference type="EMBL" id="AE014073">
    <property type="protein sequence ID" value="AAP18586.1"/>
    <property type="molecule type" value="Genomic_DNA"/>
</dbReference>
<dbReference type="RefSeq" id="WP_011069531.1">
    <property type="nucleotide sequence ID" value="NZ_CP123365.1"/>
</dbReference>
<dbReference type="SMR" id="Q83JD1"/>
<dbReference type="STRING" id="198214.SF3314"/>
<dbReference type="PaxDb" id="198214-SF3314"/>
<dbReference type="KEGG" id="sfl:SF3314"/>
<dbReference type="KEGG" id="sfx:S3538"/>
<dbReference type="PATRIC" id="fig|198214.7.peg.3923"/>
<dbReference type="HOGENOM" id="CLU_031397_6_0_6"/>
<dbReference type="Proteomes" id="UP000001006">
    <property type="component" value="Chromosome"/>
</dbReference>
<dbReference type="Proteomes" id="UP000002673">
    <property type="component" value="Chromosome"/>
</dbReference>
<dbReference type="GO" id="GO:0005737">
    <property type="term" value="C:cytoplasm"/>
    <property type="evidence" value="ECO:0007669"/>
    <property type="project" value="UniProtKB-SubCell"/>
</dbReference>
<dbReference type="GO" id="GO:0005524">
    <property type="term" value="F:ATP binding"/>
    <property type="evidence" value="ECO:0007669"/>
    <property type="project" value="UniProtKB-UniRule"/>
</dbReference>
<dbReference type="GO" id="GO:0003725">
    <property type="term" value="F:double-stranded RNA binding"/>
    <property type="evidence" value="ECO:0007669"/>
    <property type="project" value="InterPro"/>
</dbReference>
<dbReference type="GO" id="GO:0061710">
    <property type="term" value="F:L-threonylcarbamoyladenylate synthase"/>
    <property type="evidence" value="ECO:0007669"/>
    <property type="project" value="UniProtKB-EC"/>
</dbReference>
<dbReference type="GO" id="GO:0000049">
    <property type="term" value="F:tRNA binding"/>
    <property type="evidence" value="ECO:0007669"/>
    <property type="project" value="TreeGrafter"/>
</dbReference>
<dbReference type="GO" id="GO:0006450">
    <property type="term" value="P:regulation of translational fidelity"/>
    <property type="evidence" value="ECO:0007669"/>
    <property type="project" value="TreeGrafter"/>
</dbReference>
<dbReference type="GO" id="GO:0002949">
    <property type="term" value="P:tRNA threonylcarbamoyladenosine modification"/>
    <property type="evidence" value="ECO:0007669"/>
    <property type="project" value="UniProtKB-UniRule"/>
</dbReference>
<dbReference type="FunFam" id="3.90.870.10:FF:000004">
    <property type="entry name" value="Threonylcarbamoyl-AMP synthase"/>
    <property type="match status" value="1"/>
</dbReference>
<dbReference type="Gene3D" id="3.90.870.10">
    <property type="entry name" value="DHBP synthase"/>
    <property type="match status" value="1"/>
</dbReference>
<dbReference type="HAMAP" id="MF_01852">
    <property type="entry name" value="TsaC"/>
    <property type="match status" value="1"/>
</dbReference>
<dbReference type="InterPro" id="IPR017945">
    <property type="entry name" value="DHBP_synth_RibB-like_a/b_dom"/>
</dbReference>
<dbReference type="InterPro" id="IPR006070">
    <property type="entry name" value="Sua5-like_dom"/>
</dbReference>
<dbReference type="InterPro" id="IPR023535">
    <property type="entry name" value="TC-AMP_synthase"/>
</dbReference>
<dbReference type="InterPro" id="IPR050156">
    <property type="entry name" value="TC-AMP_synthase_SUA5"/>
</dbReference>
<dbReference type="NCBIfam" id="NF007919">
    <property type="entry name" value="PRK10634.1"/>
    <property type="match status" value="1"/>
</dbReference>
<dbReference type="PANTHER" id="PTHR17490">
    <property type="entry name" value="SUA5"/>
    <property type="match status" value="1"/>
</dbReference>
<dbReference type="PANTHER" id="PTHR17490:SF18">
    <property type="entry name" value="THREONYLCARBAMOYL-AMP SYNTHASE"/>
    <property type="match status" value="1"/>
</dbReference>
<dbReference type="Pfam" id="PF01300">
    <property type="entry name" value="Sua5_yciO_yrdC"/>
    <property type="match status" value="1"/>
</dbReference>
<dbReference type="SUPFAM" id="SSF55821">
    <property type="entry name" value="YrdC/RibB"/>
    <property type="match status" value="1"/>
</dbReference>
<dbReference type="PROSITE" id="PS51163">
    <property type="entry name" value="YRDC"/>
    <property type="match status" value="1"/>
</dbReference>
<comment type="function">
    <text evidence="1">Required for the formation of a threonylcarbamoyl group on adenosine at position 37 (t(6)A37) in tRNAs that read codons beginning with adenine. Catalyzes the conversion of L-threonine, HCO(3)(-)/CO(2) and ATP to give threonylcarbamoyl-AMP (TC-AMP) as the acyladenylate intermediate, with the release of diphosphate.</text>
</comment>
<comment type="catalytic activity">
    <reaction evidence="1">
        <text>L-threonine + hydrogencarbonate + ATP = L-threonylcarbamoyladenylate + diphosphate + H2O</text>
        <dbReference type="Rhea" id="RHEA:36407"/>
        <dbReference type="ChEBI" id="CHEBI:15377"/>
        <dbReference type="ChEBI" id="CHEBI:17544"/>
        <dbReference type="ChEBI" id="CHEBI:30616"/>
        <dbReference type="ChEBI" id="CHEBI:33019"/>
        <dbReference type="ChEBI" id="CHEBI:57926"/>
        <dbReference type="ChEBI" id="CHEBI:73682"/>
        <dbReference type="EC" id="2.7.7.87"/>
    </reaction>
</comment>
<comment type="subcellular location">
    <subcellularLocation>
        <location evidence="1">Cytoplasm</location>
    </subcellularLocation>
</comment>
<comment type="similarity">
    <text evidence="1">Belongs to the SUA5 family. TsaC subfamily.</text>
</comment>